<name>ORRM1_ORYSJ</name>
<gene>
    <name evidence="5" type="primary">ORRM1</name>
    <name evidence="8" type="ordered locus">Os02g0730800</name>
    <name evidence="5" type="ordered locus">LOC_Os02g49820</name>
    <name evidence="7" type="ORF">OSJNBa0072H09.43</name>
    <name evidence="6" type="ORF">P0617A09.22</name>
</gene>
<accession>Q6YWP9</accession>
<organism>
    <name type="scientific">Oryza sativa subsp. japonica</name>
    <name type="common">Rice</name>
    <dbReference type="NCBI Taxonomy" id="39947"/>
    <lineage>
        <taxon>Eukaryota</taxon>
        <taxon>Viridiplantae</taxon>
        <taxon>Streptophyta</taxon>
        <taxon>Embryophyta</taxon>
        <taxon>Tracheophyta</taxon>
        <taxon>Spermatophyta</taxon>
        <taxon>Magnoliopsida</taxon>
        <taxon>Liliopsida</taxon>
        <taxon>Poales</taxon>
        <taxon>Poaceae</taxon>
        <taxon>BOP clade</taxon>
        <taxon>Oryzoideae</taxon>
        <taxon>Oryzeae</taxon>
        <taxon>Oryzinae</taxon>
        <taxon>Oryza</taxon>
        <taxon>Oryza sativa</taxon>
    </lineage>
</organism>
<keyword id="KW-0150">Chloroplast</keyword>
<keyword id="KW-0507">mRNA processing</keyword>
<keyword id="KW-0934">Plastid</keyword>
<keyword id="KW-1185">Reference proteome</keyword>
<keyword id="KW-0694">RNA-binding</keyword>
<keyword id="KW-0809">Transit peptide</keyword>
<sequence length="399" mass="43548">MDAARASLLLAGGLAVSTSTSAVATAAQTVSIPHLSPHTRRRRQRRFLRLASAAASSPPPLPAASAQPHCSRWVVVMERPPAPAGGGEVSRAEAVDHYVATLARVLGSQEEAQMRIYDASWDGSYEFSCEIDDEASRDLAKMPGVLAVKPDTDKVDMSEKDNHGSGLSAANLGNFSDAVSNHSSSSGENEFWLVRMEKPGVEVVTKAQMVDHYTQTLMKVLGNEKDAQVSIYHISWERDYGFCCHIDEECAKELADVSGVLSVQPDTNFGSDNKNYKGDDSFKSSEATQAEVKTKRLFVTGLSFYTSEKTLRAAFEPFGELVEVKIIMDKISKRSKGYAFIEYTTEEAGGAALKAMNGQIINGWMIVVDVAKHRSRDRQPPYSASGRSNQVLRSRYHTG</sequence>
<dbReference type="EMBL" id="AP004888">
    <property type="protein sequence ID" value="BAD15930.1"/>
    <property type="molecule type" value="Genomic_DNA"/>
</dbReference>
<dbReference type="EMBL" id="AP005751">
    <property type="protein sequence ID" value="BAD16369.1"/>
    <property type="molecule type" value="Genomic_DNA"/>
</dbReference>
<dbReference type="EMBL" id="AP008208">
    <property type="protein sequence ID" value="BAF09930.1"/>
    <property type="molecule type" value="Genomic_DNA"/>
</dbReference>
<dbReference type="EMBL" id="AP014958">
    <property type="protein sequence ID" value="BAS80750.1"/>
    <property type="molecule type" value="Genomic_DNA"/>
</dbReference>
<dbReference type="SMR" id="Q6YWP9"/>
<dbReference type="FunCoup" id="Q6YWP9">
    <property type="interactions" value="2860"/>
</dbReference>
<dbReference type="STRING" id="39947.Q6YWP9"/>
<dbReference type="PaxDb" id="39947-Q6YWP9"/>
<dbReference type="EnsemblPlants" id="Os02t0730800-01">
    <property type="protein sequence ID" value="Os02t0730800-01"/>
    <property type="gene ID" value="Os02g0730800"/>
</dbReference>
<dbReference type="Gramene" id="Os02t0730800-01">
    <property type="protein sequence ID" value="Os02t0730800-01"/>
    <property type="gene ID" value="Os02g0730800"/>
</dbReference>
<dbReference type="KEGG" id="dosa:Os02g0730800"/>
<dbReference type="KEGG" id="osa:4330618"/>
<dbReference type="eggNOG" id="KOG0118">
    <property type="taxonomic scope" value="Eukaryota"/>
</dbReference>
<dbReference type="HOGENOM" id="CLU_056098_0_0_1"/>
<dbReference type="InParanoid" id="Q6YWP9"/>
<dbReference type="OMA" id="IYHISWQ"/>
<dbReference type="OrthoDB" id="4207594at2759"/>
<dbReference type="Proteomes" id="UP000000763">
    <property type="component" value="Chromosome 2"/>
</dbReference>
<dbReference type="Proteomes" id="UP000059680">
    <property type="component" value="Chromosome 2"/>
</dbReference>
<dbReference type="GO" id="GO:0009507">
    <property type="term" value="C:chloroplast"/>
    <property type="evidence" value="ECO:0007669"/>
    <property type="project" value="UniProtKB-SubCell"/>
</dbReference>
<dbReference type="GO" id="GO:0005739">
    <property type="term" value="C:mitochondrion"/>
    <property type="evidence" value="ECO:0000318"/>
    <property type="project" value="GO_Central"/>
</dbReference>
<dbReference type="GO" id="GO:0003723">
    <property type="term" value="F:RNA binding"/>
    <property type="evidence" value="ECO:0007669"/>
    <property type="project" value="UniProtKB-KW"/>
</dbReference>
<dbReference type="GO" id="GO:0016554">
    <property type="term" value="P:cytidine to uridine editing"/>
    <property type="evidence" value="ECO:0007669"/>
    <property type="project" value="InterPro"/>
</dbReference>
<dbReference type="GO" id="GO:0080156">
    <property type="term" value="P:mitochondrial mRNA modification"/>
    <property type="evidence" value="ECO:0000318"/>
    <property type="project" value="GO_Central"/>
</dbReference>
<dbReference type="GO" id="GO:0006397">
    <property type="term" value="P:mRNA processing"/>
    <property type="evidence" value="ECO:0007669"/>
    <property type="project" value="UniProtKB-KW"/>
</dbReference>
<dbReference type="FunFam" id="3.30.70.330:FF:000474">
    <property type="entry name" value="Organelle RRM domain-containing protein 1, chloroplastic"/>
    <property type="match status" value="1"/>
</dbReference>
<dbReference type="FunFam" id="3.30.70.80:FF:000007">
    <property type="entry name" value="Organelle RRM domain-containing protein 1, chloroplastic"/>
    <property type="match status" value="1"/>
</dbReference>
<dbReference type="FunFam" id="3.30.70.80:FF:000009">
    <property type="entry name" value="Organelle RRM domain-containing protein 1, chloroplastic"/>
    <property type="match status" value="1"/>
</dbReference>
<dbReference type="Gene3D" id="3.30.70.330">
    <property type="match status" value="1"/>
</dbReference>
<dbReference type="Gene3D" id="3.30.70.80">
    <property type="entry name" value="Peptidase S8 propeptide/proteinase inhibitor I9"/>
    <property type="match status" value="2"/>
</dbReference>
<dbReference type="InterPro" id="IPR039206">
    <property type="entry name" value="MORF/ORRM1/DAG-like"/>
</dbReference>
<dbReference type="InterPro" id="IPR054059">
    <property type="entry name" value="MORF/ORRM1/DAG-like_MORF"/>
</dbReference>
<dbReference type="InterPro" id="IPR012677">
    <property type="entry name" value="Nucleotide-bd_a/b_plait_sf"/>
</dbReference>
<dbReference type="InterPro" id="IPR035979">
    <property type="entry name" value="RBD_domain_sf"/>
</dbReference>
<dbReference type="InterPro" id="IPR000504">
    <property type="entry name" value="RRM_dom"/>
</dbReference>
<dbReference type="InterPro" id="IPR037045">
    <property type="entry name" value="S8pro/Inhibitor_I9_sf"/>
</dbReference>
<dbReference type="PANTHER" id="PTHR31346:SF7">
    <property type="entry name" value="MULTIPLE ORGANELLAR RNA EDITING FACTOR 2, CHLOROPLASTIC-RELATED"/>
    <property type="match status" value="1"/>
</dbReference>
<dbReference type="PANTHER" id="PTHR31346">
    <property type="entry name" value="MULTIPLE ORGANELLAR RNA EDITING FACTOR 2, CHLOROPLASTIC-RELATED-RELATED"/>
    <property type="match status" value="1"/>
</dbReference>
<dbReference type="Pfam" id="PF21864">
    <property type="entry name" value="MORF_dom"/>
    <property type="match status" value="2"/>
</dbReference>
<dbReference type="Pfam" id="PF00076">
    <property type="entry name" value="RRM_1"/>
    <property type="match status" value="1"/>
</dbReference>
<dbReference type="SMART" id="SM00360">
    <property type="entry name" value="RRM"/>
    <property type="match status" value="1"/>
</dbReference>
<dbReference type="SUPFAM" id="SSF54928">
    <property type="entry name" value="RNA-binding domain, RBD"/>
    <property type="match status" value="1"/>
</dbReference>
<dbReference type="PROSITE" id="PS50102">
    <property type="entry name" value="RRM"/>
    <property type="match status" value="1"/>
</dbReference>
<proteinExistence type="inferred from homology"/>
<protein>
    <recommendedName>
        <fullName evidence="5">Organelle RRM domain-containing protein 1, chloroplastic</fullName>
    </recommendedName>
</protein>
<evidence type="ECO:0000250" key="1">
    <source>
        <dbReference type="UniProtKB" id="C0HFE5"/>
    </source>
</evidence>
<evidence type="ECO:0000255" key="2"/>
<evidence type="ECO:0000255" key="3">
    <source>
        <dbReference type="PROSITE-ProRule" id="PRU00176"/>
    </source>
</evidence>
<evidence type="ECO:0000256" key="4">
    <source>
        <dbReference type="SAM" id="MobiDB-lite"/>
    </source>
</evidence>
<evidence type="ECO:0000305" key="5"/>
<evidence type="ECO:0000312" key="6">
    <source>
        <dbReference type="EMBL" id="BAD15930.1"/>
    </source>
</evidence>
<evidence type="ECO:0000312" key="7">
    <source>
        <dbReference type="EMBL" id="BAD16369.1"/>
    </source>
</evidence>
<evidence type="ECO:0000312" key="8">
    <source>
        <dbReference type="EMBL" id="BAF09930.1"/>
    </source>
</evidence>
<reference key="1">
    <citation type="journal article" date="2005" name="Nature">
        <title>The map-based sequence of the rice genome.</title>
        <authorList>
            <consortium name="International rice genome sequencing project (IRGSP)"/>
        </authorList>
    </citation>
    <scope>NUCLEOTIDE SEQUENCE [LARGE SCALE GENOMIC DNA]</scope>
    <source>
        <strain>cv. Nipponbare</strain>
    </source>
</reference>
<reference key="2">
    <citation type="journal article" date="2008" name="Nucleic Acids Res.">
        <title>The rice annotation project database (RAP-DB): 2008 update.</title>
        <authorList>
            <consortium name="The rice annotation project (RAP)"/>
        </authorList>
    </citation>
    <scope>GENOME REANNOTATION</scope>
    <source>
        <strain>cv. Nipponbare</strain>
    </source>
</reference>
<reference key="3">
    <citation type="journal article" date="2013" name="Rice">
        <title>Improvement of the Oryza sativa Nipponbare reference genome using next generation sequence and optical map data.</title>
        <authorList>
            <person name="Kawahara Y."/>
            <person name="de la Bastide M."/>
            <person name="Hamilton J.P."/>
            <person name="Kanamori H."/>
            <person name="McCombie W.R."/>
            <person name="Ouyang S."/>
            <person name="Schwartz D.C."/>
            <person name="Tanaka T."/>
            <person name="Wu J."/>
            <person name="Zhou S."/>
            <person name="Childs K.L."/>
            <person name="Davidson R.M."/>
            <person name="Lin H."/>
            <person name="Quesada-Ocampo L."/>
            <person name="Vaillancourt B."/>
            <person name="Sakai H."/>
            <person name="Lee S.S."/>
            <person name="Kim J."/>
            <person name="Numa H."/>
            <person name="Itoh T."/>
            <person name="Buell C.R."/>
            <person name="Matsumoto T."/>
        </authorList>
    </citation>
    <scope>GENOME REANNOTATION</scope>
    <source>
        <strain>cv. Nipponbare</strain>
    </source>
</reference>
<feature type="transit peptide" description="Chloroplast" evidence="2">
    <location>
        <begin position="1"/>
        <end position="52"/>
    </location>
</feature>
<feature type="chain" id="PRO_5010683123" description="Organelle RRM domain-containing protein 1, chloroplastic">
    <location>
        <begin position="53"/>
        <end position="399"/>
    </location>
</feature>
<feature type="domain" description="RRM" evidence="3">
    <location>
        <begin position="295"/>
        <end position="373"/>
    </location>
</feature>
<feature type="region of interest" description="Disordered" evidence="4">
    <location>
        <begin position="377"/>
        <end position="399"/>
    </location>
</feature>
<comment type="function">
    <text evidence="1">Involved in C-to-U editing of chloroplastic RNA. Functions as major chloroplastic editing factor. Controls a majority of the chloroplastic editing sites.</text>
</comment>
<comment type="subcellular location">
    <subcellularLocation>
        <location evidence="2">Plastid</location>
        <location evidence="2">Chloroplast</location>
    </subcellularLocation>
</comment>